<feature type="chain" id="PRO_1000073328" description="Large ribosomal subunit protein uL16">
    <location>
        <begin position="1"/>
        <end position="139"/>
    </location>
</feature>
<reference key="1">
    <citation type="journal article" date="2011" name="Stand. Genomic Sci.">
        <title>Complete genome sequence of Parvibaculum lavamentivorans type strain (DS-1(T)).</title>
        <authorList>
            <person name="Schleheck D."/>
            <person name="Weiss M."/>
            <person name="Pitluck S."/>
            <person name="Bruce D."/>
            <person name="Land M.L."/>
            <person name="Han S."/>
            <person name="Saunders E."/>
            <person name="Tapia R."/>
            <person name="Detter C."/>
            <person name="Brettin T."/>
            <person name="Han J."/>
            <person name="Woyke T."/>
            <person name="Goodwin L."/>
            <person name="Pennacchio L."/>
            <person name="Nolan M."/>
            <person name="Cook A.M."/>
            <person name="Kjelleberg S."/>
            <person name="Thomas T."/>
        </authorList>
    </citation>
    <scope>NUCLEOTIDE SEQUENCE [LARGE SCALE GENOMIC DNA]</scope>
    <source>
        <strain>DS-1 / DSM 13023 / NCIMB 13966</strain>
    </source>
</reference>
<dbReference type="EMBL" id="CP000774">
    <property type="protein sequence ID" value="ABS64351.1"/>
    <property type="molecule type" value="Genomic_DNA"/>
</dbReference>
<dbReference type="RefSeq" id="WP_012111665.1">
    <property type="nucleotide sequence ID" value="NC_009719.1"/>
</dbReference>
<dbReference type="SMR" id="A7HWR8"/>
<dbReference type="STRING" id="402881.Plav_2743"/>
<dbReference type="KEGG" id="pla:Plav_2743"/>
<dbReference type="eggNOG" id="COG0197">
    <property type="taxonomic scope" value="Bacteria"/>
</dbReference>
<dbReference type="HOGENOM" id="CLU_078858_2_1_5"/>
<dbReference type="OrthoDB" id="9802589at2"/>
<dbReference type="Proteomes" id="UP000006377">
    <property type="component" value="Chromosome"/>
</dbReference>
<dbReference type="GO" id="GO:0022625">
    <property type="term" value="C:cytosolic large ribosomal subunit"/>
    <property type="evidence" value="ECO:0007669"/>
    <property type="project" value="TreeGrafter"/>
</dbReference>
<dbReference type="GO" id="GO:0019843">
    <property type="term" value="F:rRNA binding"/>
    <property type="evidence" value="ECO:0007669"/>
    <property type="project" value="UniProtKB-UniRule"/>
</dbReference>
<dbReference type="GO" id="GO:0003735">
    <property type="term" value="F:structural constituent of ribosome"/>
    <property type="evidence" value="ECO:0007669"/>
    <property type="project" value="InterPro"/>
</dbReference>
<dbReference type="GO" id="GO:0000049">
    <property type="term" value="F:tRNA binding"/>
    <property type="evidence" value="ECO:0007669"/>
    <property type="project" value="UniProtKB-KW"/>
</dbReference>
<dbReference type="GO" id="GO:0006412">
    <property type="term" value="P:translation"/>
    <property type="evidence" value="ECO:0007669"/>
    <property type="project" value="UniProtKB-UniRule"/>
</dbReference>
<dbReference type="CDD" id="cd01433">
    <property type="entry name" value="Ribosomal_L16_L10e"/>
    <property type="match status" value="1"/>
</dbReference>
<dbReference type="FunFam" id="3.90.1170.10:FF:000001">
    <property type="entry name" value="50S ribosomal protein L16"/>
    <property type="match status" value="1"/>
</dbReference>
<dbReference type="Gene3D" id="3.90.1170.10">
    <property type="entry name" value="Ribosomal protein L10e/L16"/>
    <property type="match status" value="1"/>
</dbReference>
<dbReference type="HAMAP" id="MF_01342">
    <property type="entry name" value="Ribosomal_uL16"/>
    <property type="match status" value="1"/>
</dbReference>
<dbReference type="InterPro" id="IPR047873">
    <property type="entry name" value="Ribosomal_uL16"/>
</dbReference>
<dbReference type="InterPro" id="IPR000114">
    <property type="entry name" value="Ribosomal_uL16_bact-type"/>
</dbReference>
<dbReference type="InterPro" id="IPR020798">
    <property type="entry name" value="Ribosomal_uL16_CS"/>
</dbReference>
<dbReference type="InterPro" id="IPR016180">
    <property type="entry name" value="Ribosomal_uL16_dom"/>
</dbReference>
<dbReference type="InterPro" id="IPR036920">
    <property type="entry name" value="Ribosomal_uL16_sf"/>
</dbReference>
<dbReference type="NCBIfam" id="TIGR01164">
    <property type="entry name" value="rplP_bact"/>
    <property type="match status" value="1"/>
</dbReference>
<dbReference type="PANTHER" id="PTHR12220">
    <property type="entry name" value="50S/60S RIBOSOMAL PROTEIN L16"/>
    <property type="match status" value="1"/>
</dbReference>
<dbReference type="PANTHER" id="PTHR12220:SF13">
    <property type="entry name" value="LARGE RIBOSOMAL SUBUNIT PROTEIN UL16M"/>
    <property type="match status" value="1"/>
</dbReference>
<dbReference type="Pfam" id="PF00252">
    <property type="entry name" value="Ribosomal_L16"/>
    <property type="match status" value="1"/>
</dbReference>
<dbReference type="PRINTS" id="PR00060">
    <property type="entry name" value="RIBOSOMALL16"/>
</dbReference>
<dbReference type="SUPFAM" id="SSF54686">
    <property type="entry name" value="Ribosomal protein L16p/L10e"/>
    <property type="match status" value="1"/>
</dbReference>
<dbReference type="PROSITE" id="PS00586">
    <property type="entry name" value="RIBOSOMAL_L16_1"/>
    <property type="match status" value="1"/>
</dbReference>
<dbReference type="PROSITE" id="PS00701">
    <property type="entry name" value="RIBOSOMAL_L16_2"/>
    <property type="match status" value="1"/>
</dbReference>
<gene>
    <name evidence="1" type="primary">rplP</name>
    <name type="ordered locus">Plav_2743</name>
</gene>
<organism>
    <name type="scientific">Parvibaculum lavamentivorans (strain DS-1 / DSM 13023 / NCIMB 13966)</name>
    <dbReference type="NCBI Taxonomy" id="402881"/>
    <lineage>
        <taxon>Bacteria</taxon>
        <taxon>Pseudomonadati</taxon>
        <taxon>Pseudomonadota</taxon>
        <taxon>Alphaproteobacteria</taxon>
        <taxon>Hyphomicrobiales</taxon>
        <taxon>Parvibaculaceae</taxon>
        <taxon>Parvibaculum</taxon>
    </lineage>
</organism>
<sequence length="139" mass="15474">MLQPKRTKFRKAHKGRIHGKAKGGMHLDFGAFGLKAQEPARITARQIEAARRAITRHMKRAGRVWIRIFPDVPVSSKPTEVRMGKGKGAPEYWAARVKPGRIMFEIDGVPLAVAEEAMRLGAAKLPIKTRFVARPGEQA</sequence>
<protein>
    <recommendedName>
        <fullName evidence="1">Large ribosomal subunit protein uL16</fullName>
    </recommendedName>
    <alternativeName>
        <fullName evidence="2">50S ribosomal protein L16</fullName>
    </alternativeName>
</protein>
<name>RL16_PARL1</name>
<evidence type="ECO:0000255" key="1">
    <source>
        <dbReference type="HAMAP-Rule" id="MF_01342"/>
    </source>
</evidence>
<evidence type="ECO:0000305" key="2"/>
<proteinExistence type="inferred from homology"/>
<comment type="function">
    <text evidence="1">Binds 23S rRNA and is also seen to make contacts with the A and possibly P site tRNAs.</text>
</comment>
<comment type="subunit">
    <text evidence="1">Part of the 50S ribosomal subunit.</text>
</comment>
<comment type="similarity">
    <text evidence="1">Belongs to the universal ribosomal protein uL16 family.</text>
</comment>
<keyword id="KW-1185">Reference proteome</keyword>
<keyword id="KW-0687">Ribonucleoprotein</keyword>
<keyword id="KW-0689">Ribosomal protein</keyword>
<keyword id="KW-0694">RNA-binding</keyword>
<keyword id="KW-0699">rRNA-binding</keyword>
<keyword id="KW-0820">tRNA-binding</keyword>
<accession>A7HWR8</accession>